<keyword id="KW-0963">Cytoplasm</keyword>
<keyword id="KW-0255">Endonuclease</keyword>
<keyword id="KW-0378">Hydrolase</keyword>
<keyword id="KW-0479">Metal-binding</keyword>
<keyword id="KW-0540">Nuclease</keyword>
<keyword id="KW-0690">Ribosome biogenesis</keyword>
<keyword id="KW-0698">rRNA processing</keyword>
<keyword id="KW-0862">Zinc</keyword>
<dbReference type="EC" id="3.1.-.-" evidence="1"/>
<dbReference type="EMBL" id="CP000627">
    <property type="protein sequence ID" value="ABQ20316.1"/>
    <property type="molecule type" value="Genomic_DNA"/>
</dbReference>
<dbReference type="EMBL" id="CP001235">
    <property type="protein sequence ID" value="ACP08987.1"/>
    <property type="molecule type" value="Genomic_DNA"/>
</dbReference>
<dbReference type="RefSeq" id="WP_000021205.1">
    <property type="nucleotide sequence ID" value="NZ_JAACZH010000005.1"/>
</dbReference>
<dbReference type="SMR" id="A5F2X4"/>
<dbReference type="KEGG" id="vco:VC0395_A0482"/>
<dbReference type="KEGG" id="vcr:VC395_0975"/>
<dbReference type="PATRIC" id="fig|345073.21.peg.945"/>
<dbReference type="eggNOG" id="COG0319">
    <property type="taxonomic scope" value="Bacteria"/>
</dbReference>
<dbReference type="HOGENOM" id="CLU_106710_0_1_6"/>
<dbReference type="OrthoDB" id="9807740at2"/>
<dbReference type="Proteomes" id="UP000000249">
    <property type="component" value="Chromosome 2"/>
</dbReference>
<dbReference type="GO" id="GO:0005737">
    <property type="term" value="C:cytoplasm"/>
    <property type="evidence" value="ECO:0007669"/>
    <property type="project" value="UniProtKB-SubCell"/>
</dbReference>
<dbReference type="GO" id="GO:0004222">
    <property type="term" value="F:metalloendopeptidase activity"/>
    <property type="evidence" value="ECO:0007669"/>
    <property type="project" value="InterPro"/>
</dbReference>
<dbReference type="GO" id="GO:0004521">
    <property type="term" value="F:RNA endonuclease activity"/>
    <property type="evidence" value="ECO:0007669"/>
    <property type="project" value="UniProtKB-UniRule"/>
</dbReference>
<dbReference type="GO" id="GO:0008270">
    <property type="term" value="F:zinc ion binding"/>
    <property type="evidence" value="ECO:0007669"/>
    <property type="project" value="UniProtKB-UniRule"/>
</dbReference>
<dbReference type="GO" id="GO:0006364">
    <property type="term" value="P:rRNA processing"/>
    <property type="evidence" value="ECO:0007669"/>
    <property type="project" value="UniProtKB-UniRule"/>
</dbReference>
<dbReference type="Gene3D" id="3.40.390.30">
    <property type="entry name" value="Metalloproteases ('zincins'), catalytic domain"/>
    <property type="match status" value="1"/>
</dbReference>
<dbReference type="HAMAP" id="MF_00009">
    <property type="entry name" value="Endoribonucl_YbeY"/>
    <property type="match status" value="1"/>
</dbReference>
<dbReference type="InterPro" id="IPR023091">
    <property type="entry name" value="MetalPrtase_cat_dom_sf_prd"/>
</dbReference>
<dbReference type="InterPro" id="IPR002036">
    <property type="entry name" value="YbeY"/>
</dbReference>
<dbReference type="InterPro" id="IPR020549">
    <property type="entry name" value="YbeY_CS"/>
</dbReference>
<dbReference type="NCBIfam" id="TIGR00043">
    <property type="entry name" value="rRNA maturation RNase YbeY"/>
    <property type="match status" value="1"/>
</dbReference>
<dbReference type="PANTHER" id="PTHR46986">
    <property type="entry name" value="ENDORIBONUCLEASE YBEY, CHLOROPLASTIC"/>
    <property type="match status" value="1"/>
</dbReference>
<dbReference type="PANTHER" id="PTHR46986:SF1">
    <property type="entry name" value="ENDORIBONUCLEASE YBEY, CHLOROPLASTIC"/>
    <property type="match status" value="1"/>
</dbReference>
<dbReference type="Pfam" id="PF02130">
    <property type="entry name" value="YbeY"/>
    <property type="match status" value="1"/>
</dbReference>
<dbReference type="SUPFAM" id="SSF55486">
    <property type="entry name" value="Metalloproteases ('zincins'), catalytic domain"/>
    <property type="match status" value="1"/>
</dbReference>
<dbReference type="PROSITE" id="PS01306">
    <property type="entry name" value="UPF0054"/>
    <property type="match status" value="1"/>
</dbReference>
<gene>
    <name evidence="1" type="primary">ybeY</name>
    <name type="ordered locus">VC0395_A0482</name>
    <name type="ordered locus">VC395_0975</name>
</gene>
<organism>
    <name type="scientific">Vibrio cholerae serotype O1 (strain ATCC 39541 / Classical Ogawa 395 / O395)</name>
    <dbReference type="NCBI Taxonomy" id="345073"/>
    <lineage>
        <taxon>Bacteria</taxon>
        <taxon>Pseudomonadati</taxon>
        <taxon>Pseudomonadota</taxon>
        <taxon>Gammaproteobacteria</taxon>
        <taxon>Vibrionales</taxon>
        <taxon>Vibrionaceae</taxon>
        <taxon>Vibrio</taxon>
    </lineage>
</organism>
<evidence type="ECO:0000255" key="1">
    <source>
        <dbReference type="HAMAP-Rule" id="MF_00009"/>
    </source>
</evidence>
<reference key="1">
    <citation type="submission" date="2007-03" db="EMBL/GenBank/DDBJ databases">
        <authorList>
            <person name="Heidelberg J."/>
        </authorList>
    </citation>
    <scope>NUCLEOTIDE SEQUENCE [LARGE SCALE GENOMIC DNA]</scope>
    <source>
        <strain>ATCC 39541 / Classical Ogawa 395 / O395</strain>
    </source>
</reference>
<reference key="2">
    <citation type="journal article" date="2008" name="PLoS ONE">
        <title>A recalibrated molecular clock and independent origins for the cholera pandemic clones.</title>
        <authorList>
            <person name="Feng L."/>
            <person name="Reeves P.R."/>
            <person name="Lan R."/>
            <person name="Ren Y."/>
            <person name="Gao C."/>
            <person name="Zhou Z."/>
            <person name="Ren Y."/>
            <person name="Cheng J."/>
            <person name="Wang W."/>
            <person name="Wang J."/>
            <person name="Qian W."/>
            <person name="Li D."/>
            <person name="Wang L."/>
        </authorList>
    </citation>
    <scope>NUCLEOTIDE SEQUENCE [LARGE SCALE GENOMIC DNA]</scope>
    <source>
        <strain>ATCC 39541 / Classical Ogawa 395 / O395</strain>
    </source>
</reference>
<proteinExistence type="inferred from homology"/>
<protein>
    <recommendedName>
        <fullName evidence="1">Endoribonuclease YbeY</fullName>
        <ecNumber evidence="1">3.1.-.-</ecNumber>
    </recommendedName>
</protein>
<name>YBEY_VIBC3</name>
<comment type="function">
    <text evidence="1">Single strand-specific metallo-endoribonuclease involved in late-stage 70S ribosome quality control and in maturation of the 3' terminus of the 16S rRNA.</text>
</comment>
<comment type="cofactor">
    <cofactor evidence="1">
        <name>Zn(2+)</name>
        <dbReference type="ChEBI" id="CHEBI:29105"/>
    </cofactor>
    <text evidence="1">Binds 1 zinc ion.</text>
</comment>
<comment type="subcellular location">
    <subcellularLocation>
        <location evidence="1">Cytoplasm</location>
    </subcellularLocation>
</comment>
<comment type="similarity">
    <text evidence="1">Belongs to the endoribonuclease YbeY family.</text>
</comment>
<accession>A5F2X4</accession>
<accession>C3LYX1</accession>
<feature type="chain" id="PRO_1000070934" description="Endoribonuclease YbeY">
    <location>
        <begin position="1"/>
        <end position="154"/>
    </location>
</feature>
<feature type="binding site" evidence="1">
    <location>
        <position position="113"/>
    </location>
    <ligand>
        <name>Zn(2+)</name>
        <dbReference type="ChEBI" id="CHEBI:29105"/>
        <note>catalytic</note>
    </ligand>
</feature>
<feature type="binding site" evidence="1">
    <location>
        <position position="117"/>
    </location>
    <ligand>
        <name>Zn(2+)</name>
        <dbReference type="ChEBI" id="CHEBI:29105"/>
        <note>catalytic</note>
    </ligand>
</feature>
<feature type="binding site" evidence="1">
    <location>
        <position position="123"/>
    </location>
    <ligand>
        <name>Zn(2+)</name>
        <dbReference type="ChEBI" id="CHEBI:29105"/>
        <note>catalytic</note>
    </ligand>
</feature>
<sequence>MSIELDLQLAVENEHGLPSEAEFALWLSRTITPFQPQAEVTVRIVDEAESHALNLNYRGKDKPTNVLSFPFEAPPGMEMDLLGDLVICRQVVEREAIEQNKPLQAHWAHMVVHGSLHLLGYDHIEDDEAEEMESLETEIMQEMGFTDPYLAEKE</sequence>